<feature type="chain" id="PRO_0000422083" description="J domain-containing protein required for chloroplast accumulation response 1">
    <location>
        <begin position="1"/>
        <end position="651"/>
    </location>
</feature>
<feature type="domain" description="J">
    <location>
        <begin position="586"/>
        <end position="651"/>
    </location>
</feature>
<feature type="region of interest" description="Disordered" evidence="2">
    <location>
        <begin position="1"/>
        <end position="56"/>
    </location>
</feature>
<feature type="region of interest" description="Disordered" evidence="2">
    <location>
        <begin position="114"/>
        <end position="138"/>
    </location>
</feature>
<feature type="region of interest" description="Disordered" evidence="2">
    <location>
        <begin position="156"/>
        <end position="176"/>
    </location>
</feature>
<feature type="region of interest" description="Disordered" evidence="2">
    <location>
        <begin position="250"/>
        <end position="291"/>
    </location>
</feature>
<feature type="region of interest" description="Disordered" evidence="2">
    <location>
        <begin position="308"/>
        <end position="526"/>
    </location>
</feature>
<feature type="coiled-coil region" evidence="1">
    <location>
        <begin position="532"/>
        <end position="562"/>
    </location>
</feature>
<feature type="compositionally biased region" description="Polar residues" evidence="2">
    <location>
        <begin position="1"/>
        <end position="17"/>
    </location>
</feature>
<feature type="compositionally biased region" description="Low complexity" evidence="2">
    <location>
        <begin position="126"/>
        <end position="137"/>
    </location>
</feature>
<feature type="compositionally biased region" description="Basic and acidic residues" evidence="2">
    <location>
        <begin position="250"/>
        <end position="259"/>
    </location>
</feature>
<feature type="compositionally biased region" description="Basic and acidic residues" evidence="2">
    <location>
        <begin position="281"/>
        <end position="291"/>
    </location>
</feature>
<feature type="compositionally biased region" description="Basic and acidic residues" evidence="2">
    <location>
        <begin position="337"/>
        <end position="357"/>
    </location>
</feature>
<feature type="compositionally biased region" description="Basic and acidic residues" evidence="2">
    <location>
        <begin position="405"/>
        <end position="416"/>
    </location>
</feature>
<feature type="compositionally biased region" description="Basic and acidic residues" evidence="2">
    <location>
        <begin position="441"/>
        <end position="456"/>
    </location>
</feature>
<feature type="compositionally biased region" description="Basic and acidic residues" evidence="2">
    <location>
        <begin position="488"/>
        <end position="497"/>
    </location>
</feature>
<feature type="modified residue" description="Phosphoserine" evidence="7">
    <location>
        <position position="56"/>
    </location>
</feature>
<feature type="mutagenesis site" description="Impaired chloroplast photorelocation movement." evidence="5">
    <original>HPD</original>
    <variation>AAA</variation>
    <location>
        <begin position="614"/>
        <end position="616"/>
    </location>
</feature>
<feature type="helix" evidence="8">
    <location>
        <begin position="551"/>
        <end position="564"/>
    </location>
</feature>
<feature type="turn" evidence="8">
    <location>
        <begin position="565"/>
        <end position="569"/>
    </location>
</feature>
<feature type="helix" evidence="8">
    <location>
        <begin position="571"/>
        <end position="575"/>
    </location>
</feature>
<feature type="helix" evidence="8">
    <location>
        <begin position="576"/>
        <end position="580"/>
    </location>
</feature>
<feature type="helix" evidence="8">
    <location>
        <begin position="593"/>
        <end position="595"/>
    </location>
</feature>
<feature type="helix" evidence="8">
    <location>
        <begin position="599"/>
        <end position="613"/>
    </location>
</feature>
<feature type="helix" evidence="8">
    <location>
        <begin position="615"/>
        <end position="620"/>
    </location>
</feature>
<feature type="helix" evidence="8">
    <location>
        <begin position="625"/>
        <end position="645"/>
    </location>
</feature>
<feature type="turn" evidence="8">
    <location>
        <begin position="646"/>
        <end position="648"/>
    </location>
</feature>
<gene>
    <name type="primary">JAC1</name>
    <name type="ordered locus">At1g75100</name>
    <name type="ORF">F9E10.5</name>
</gene>
<name>JAC1_ARATH</name>
<reference key="1">
    <citation type="journal article" date="2005" name="Plant Physiol.">
        <title>An auxilin-like J-domain protein, JAC1, regulates phototropin-mediated chloroplast movement in Arabidopsis.</title>
        <authorList>
            <person name="Suetsugu N."/>
            <person name="Kagawa T."/>
            <person name="Wada M."/>
        </authorList>
    </citation>
    <scope>NUCLEOTIDE SEQUENCE [MRNA]</scope>
    <scope>FUNCTION IN CHLOROPLAST MOVEMENTS</scope>
    <scope>DISRUPTION PHENOTYPE</scope>
    <scope>SUBCELLULAR LOCATION</scope>
    <scope>TISSUE SPECIFICITY</scope>
    <source>
        <strain>cv. Columbia</strain>
        <strain>cv. Landsberg erecta</strain>
    </source>
</reference>
<reference key="2">
    <citation type="journal article" date="2000" name="Nature">
        <title>Sequence and analysis of chromosome 1 of the plant Arabidopsis thaliana.</title>
        <authorList>
            <person name="Theologis A."/>
            <person name="Ecker J.R."/>
            <person name="Palm C.J."/>
            <person name="Federspiel N.A."/>
            <person name="Kaul S."/>
            <person name="White O."/>
            <person name="Alonso J."/>
            <person name="Altafi H."/>
            <person name="Araujo R."/>
            <person name="Bowman C.L."/>
            <person name="Brooks S.Y."/>
            <person name="Buehler E."/>
            <person name="Chan A."/>
            <person name="Chao Q."/>
            <person name="Chen H."/>
            <person name="Cheuk R.F."/>
            <person name="Chin C.W."/>
            <person name="Chung M.K."/>
            <person name="Conn L."/>
            <person name="Conway A.B."/>
            <person name="Conway A.R."/>
            <person name="Creasy T.H."/>
            <person name="Dewar K."/>
            <person name="Dunn P."/>
            <person name="Etgu P."/>
            <person name="Feldblyum T.V."/>
            <person name="Feng J.-D."/>
            <person name="Fong B."/>
            <person name="Fujii C.Y."/>
            <person name="Gill J.E."/>
            <person name="Goldsmith A.D."/>
            <person name="Haas B."/>
            <person name="Hansen N.F."/>
            <person name="Hughes B."/>
            <person name="Huizar L."/>
            <person name="Hunter J.L."/>
            <person name="Jenkins J."/>
            <person name="Johnson-Hopson C."/>
            <person name="Khan S."/>
            <person name="Khaykin E."/>
            <person name="Kim C.J."/>
            <person name="Koo H.L."/>
            <person name="Kremenetskaia I."/>
            <person name="Kurtz D.B."/>
            <person name="Kwan A."/>
            <person name="Lam B."/>
            <person name="Langin-Hooper S."/>
            <person name="Lee A."/>
            <person name="Lee J.M."/>
            <person name="Lenz C.A."/>
            <person name="Li J.H."/>
            <person name="Li Y.-P."/>
            <person name="Lin X."/>
            <person name="Liu S.X."/>
            <person name="Liu Z.A."/>
            <person name="Luros J.S."/>
            <person name="Maiti R."/>
            <person name="Marziali A."/>
            <person name="Militscher J."/>
            <person name="Miranda M."/>
            <person name="Nguyen M."/>
            <person name="Nierman W.C."/>
            <person name="Osborne B.I."/>
            <person name="Pai G."/>
            <person name="Peterson J."/>
            <person name="Pham P.K."/>
            <person name="Rizzo M."/>
            <person name="Rooney T."/>
            <person name="Rowley D."/>
            <person name="Sakano H."/>
            <person name="Salzberg S.L."/>
            <person name="Schwartz J.R."/>
            <person name="Shinn P."/>
            <person name="Southwick A.M."/>
            <person name="Sun H."/>
            <person name="Tallon L.J."/>
            <person name="Tambunga G."/>
            <person name="Toriumi M.J."/>
            <person name="Town C.D."/>
            <person name="Utterback T."/>
            <person name="Van Aken S."/>
            <person name="Vaysberg M."/>
            <person name="Vysotskaia V.S."/>
            <person name="Walker M."/>
            <person name="Wu D."/>
            <person name="Yu G."/>
            <person name="Fraser C.M."/>
            <person name="Venter J.C."/>
            <person name="Davis R.W."/>
        </authorList>
    </citation>
    <scope>NUCLEOTIDE SEQUENCE [LARGE SCALE GENOMIC DNA]</scope>
    <source>
        <strain>cv. Columbia</strain>
    </source>
</reference>
<reference key="3">
    <citation type="journal article" date="2017" name="Plant J.">
        <title>Araport11: a complete reannotation of the Arabidopsis thaliana reference genome.</title>
        <authorList>
            <person name="Cheng C.Y."/>
            <person name="Krishnakumar V."/>
            <person name="Chan A.P."/>
            <person name="Thibaud-Nissen F."/>
            <person name="Schobel S."/>
            <person name="Town C.D."/>
        </authorList>
    </citation>
    <scope>GENOME REANNOTATION</scope>
    <source>
        <strain>cv. Columbia</strain>
    </source>
</reference>
<reference key="4">
    <citation type="journal article" date="2003" name="Science">
        <title>Empirical analysis of transcriptional activity in the Arabidopsis genome.</title>
        <authorList>
            <person name="Yamada K."/>
            <person name="Lim J."/>
            <person name="Dale J.M."/>
            <person name="Chen H."/>
            <person name="Shinn P."/>
            <person name="Palm C.J."/>
            <person name="Southwick A.M."/>
            <person name="Wu H.C."/>
            <person name="Kim C.J."/>
            <person name="Nguyen M."/>
            <person name="Pham P.K."/>
            <person name="Cheuk R.F."/>
            <person name="Karlin-Newmann G."/>
            <person name="Liu S.X."/>
            <person name="Lam B."/>
            <person name="Sakano H."/>
            <person name="Wu T."/>
            <person name="Yu G."/>
            <person name="Miranda M."/>
            <person name="Quach H.L."/>
            <person name="Tripp M."/>
            <person name="Chang C.H."/>
            <person name="Lee J.M."/>
            <person name="Toriumi M.J."/>
            <person name="Chan M.M."/>
            <person name="Tang C.C."/>
            <person name="Onodera C.S."/>
            <person name="Deng J.M."/>
            <person name="Akiyama K."/>
            <person name="Ansari Y."/>
            <person name="Arakawa T."/>
            <person name="Banh J."/>
            <person name="Banno F."/>
            <person name="Bowser L."/>
            <person name="Brooks S.Y."/>
            <person name="Carninci P."/>
            <person name="Chao Q."/>
            <person name="Choy N."/>
            <person name="Enju A."/>
            <person name="Goldsmith A.D."/>
            <person name="Gurjal M."/>
            <person name="Hansen N.F."/>
            <person name="Hayashizaki Y."/>
            <person name="Johnson-Hopson C."/>
            <person name="Hsuan V.W."/>
            <person name="Iida K."/>
            <person name="Karnes M."/>
            <person name="Khan S."/>
            <person name="Koesema E."/>
            <person name="Ishida J."/>
            <person name="Jiang P.X."/>
            <person name="Jones T."/>
            <person name="Kawai J."/>
            <person name="Kamiya A."/>
            <person name="Meyers C."/>
            <person name="Nakajima M."/>
            <person name="Narusaka M."/>
            <person name="Seki M."/>
            <person name="Sakurai T."/>
            <person name="Satou M."/>
            <person name="Tamse R."/>
            <person name="Vaysberg M."/>
            <person name="Wallender E.K."/>
            <person name="Wong C."/>
            <person name="Yamamura Y."/>
            <person name="Yuan S."/>
            <person name="Shinozaki K."/>
            <person name="Davis R.W."/>
            <person name="Theologis A."/>
            <person name="Ecker J.R."/>
        </authorList>
    </citation>
    <scope>NUCLEOTIDE SEQUENCE [LARGE SCALE MRNA]</scope>
    <source>
        <strain>cv. Columbia</strain>
    </source>
</reference>
<reference key="5">
    <citation type="journal article" date="2007" name="Biol. Chem.">
        <title>Chloroplast photorelocation movement mediated by phototropin family proteins in green plants.</title>
        <authorList>
            <person name="Suetsugu N."/>
            <person name="Wada M."/>
        </authorList>
    </citation>
    <scope>REVIEW</scope>
</reference>
<reference key="6">
    <citation type="journal article" date="2007" name="J. Exp. Bot.">
        <title>Overexpression of an auxilin-like gene (F9E10.5) can suppress Al uptake in roots of Arabidopsis.</title>
        <authorList>
            <person name="Ezaki B."/>
            <person name="Kiyohara H."/>
            <person name="Matsumoto H."/>
            <person name="Nakashima S."/>
        </authorList>
    </citation>
    <scope>FUNCTION IN ALUMINUM RESISTANCE</scope>
</reference>
<reference key="7">
    <citation type="journal article" date="2009" name="Plant Physiol.">
        <title>Large-scale Arabidopsis phosphoproteome profiling reveals novel chloroplast kinase substrates and phosphorylation networks.</title>
        <authorList>
            <person name="Reiland S."/>
            <person name="Messerli G."/>
            <person name="Baerenfaller K."/>
            <person name="Gerrits B."/>
            <person name="Endler A."/>
            <person name="Grossmann J."/>
            <person name="Gruissem W."/>
            <person name="Baginsky S."/>
        </authorList>
    </citation>
    <scope>PHOSPHORYLATION [LARGE SCALE ANALYSIS] AT SER-56</scope>
    <scope>IDENTIFICATION BY MASS SPECTROMETRY [LARGE SCALE ANALYSIS]</scope>
</reference>
<reference key="8">
    <citation type="journal article" date="2011" name="Plant Cell Physiol.">
        <title>Red light, Phot1 and JAC1 modulate Phot2-dependent reorganization of chloroplast actin filaments and chloroplast avoidance movement.</title>
        <authorList>
            <person name="Ichikawa S."/>
            <person name="Yamada N."/>
            <person name="Suetsugu N."/>
            <person name="Wada M."/>
            <person name="Kadota A."/>
        </authorList>
    </citation>
    <scope>FUNCTION IN ACTIN FILAMENTS REGULATION</scope>
    <scope>DISRUPTION PHENOTYPE</scope>
    <source>
        <strain>cv. Columbia GL1</strain>
    </source>
</reference>
<reference key="9">
    <citation type="journal article" date="2010" name="Plant Cell Physiol.">
        <title>Crystallographic and functional analyses of J-domain of JAC1 essential for chloroplast photorelocation movement in Arabidopsis thaliana.</title>
        <authorList>
            <person name="Takano A."/>
            <person name="Suetsugu N."/>
            <person name="Wada M."/>
            <person name="Kohda D."/>
        </authorList>
    </citation>
    <scope>X-RAY CRYSTALLOGRAPHY (1.80 ANGSTROMS) OF 551-651</scope>
    <scope>FUNCTION</scope>
    <scope>DISRUPTION PHENOTYPE</scope>
    <scope>MUTAGENESIS OF 614-HIS--ASP-616</scope>
</reference>
<comment type="function">
    <text evidence="3 4 5 6">Required for chloroplast photorelocation movement; chloroplast accumulation upon low blue light and for chloroplast movement to the bottom of cells in darkness, by modulating chloroplast actin (Cp-actin) filaments distribution, appearance and disappearance. May mediate a slight resistance to aluminum in root hair cells.</text>
</comment>
<comment type="subcellular location">
    <subcellularLocation>
        <location evidence="3">Cytoplasm</location>
    </subcellularLocation>
</comment>
<comment type="tissue specificity">
    <text evidence="3">Expressed in leaves and stems, but not in roots.</text>
</comment>
<comment type="domain">
    <text evidence="5">The J domain co-chaperone activity is required for chloroplast photorelocation movement.</text>
</comment>
<comment type="disruption phenotype">
    <text evidence="3 5 6">Lacks the chloroplast accumulation response under weak blue light and chloroplast movement in darkness, but shows a normal avoidance response under strong blue light. Non biased distribution of chloroplast actin (Cp-actin) filaments.</text>
</comment>
<protein>
    <recommendedName>
        <fullName>J domain-containing protein required for chloroplast accumulation response 1</fullName>
    </recommendedName>
</protein>
<accession>Q9C9Q4</accession>
<sequence>MQTLPSSETVLLGSNSAPPVLRSPGGDDVDIDFGDVFGGPPKRRSKVTSNEVTRHSFSESALRRRDVIVDVGDLLPQDEKPVFGEDTSSVRRRFTTDDFFDDIFRVNESSSLPGSRILSPAHKPESSSGTSSPSQFSLPAKATEIPTFNLAATRSLNKNKETVSSSPLSRTSSKADVVSTAKSYSDDCDDPPQVFVTGKGRQFHFSIYKWPNKGVPVVIWGSSRLSSMSKAEETTPVPLSDYRKTSVVEKLGKNEEGDGKSGLSGLKDVKKTSLKRPGVQTKEEKTETDLKSEQAFFGVSKAREANVKPLDSVESEQAFSGVSKAHEATTVKPLHSIFHEEDERQDEKIVSEREVRKGKSKAKNTRSFTEDSRTKKKSQGTKSSLDSSPIPDKSSFASSSAAPEVGKDGVKGKVSDFVKIFSKGASVGAGGESLGQSSRWRAKETPKTDIIHDGSNAKETVNIPDQQKKSTPDIPAMNRDQKPSQSTQKKDSDRESMNYKAPGDTVQEERQEPSTTHTTSEDIDEPFHVNFDVEDITQDENKMEEANKDAEEIKNIDAKIRKWSSGKSGNIRSLLSTLQYILWSGSGWKPVPLMDMIEGNAVRKSYQRALLILHPDKLQQKGASANQKYMAEKVFELLQEAWDHFNTLGPV</sequence>
<evidence type="ECO:0000255" key="1"/>
<evidence type="ECO:0000256" key="2">
    <source>
        <dbReference type="SAM" id="MobiDB-lite"/>
    </source>
</evidence>
<evidence type="ECO:0000269" key="3">
    <source>
    </source>
</evidence>
<evidence type="ECO:0000269" key="4">
    <source>
    </source>
</evidence>
<evidence type="ECO:0000269" key="5">
    <source>
    </source>
</evidence>
<evidence type="ECO:0000269" key="6">
    <source>
    </source>
</evidence>
<evidence type="ECO:0007744" key="7">
    <source>
    </source>
</evidence>
<evidence type="ECO:0007829" key="8">
    <source>
        <dbReference type="PDB" id="3AG7"/>
    </source>
</evidence>
<keyword id="KW-0002">3D-structure</keyword>
<keyword id="KW-0175">Coiled coil</keyword>
<keyword id="KW-0963">Cytoplasm</keyword>
<keyword id="KW-0597">Phosphoprotein</keyword>
<keyword id="KW-1185">Reference proteome</keyword>
<dbReference type="EMBL" id="AB158477">
    <property type="protein sequence ID" value="BAE44203.1"/>
    <property type="molecule type" value="mRNA"/>
</dbReference>
<dbReference type="EMBL" id="AC013258">
    <property type="protein sequence ID" value="AAG51921.1"/>
    <property type="molecule type" value="Genomic_DNA"/>
</dbReference>
<dbReference type="EMBL" id="CP002684">
    <property type="protein sequence ID" value="AEE35672.1"/>
    <property type="molecule type" value="Genomic_DNA"/>
</dbReference>
<dbReference type="EMBL" id="AY057504">
    <property type="protein sequence ID" value="AAL09745.1"/>
    <property type="molecule type" value="mRNA"/>
</dbReference>
<dbReference type="EMBL" id="AY103303">
    <property type="protein sequence ID" value="AAM65355.1"/>
    <property type="molecule type" value="mRNA"/>
</dbReference>
<dbReference type="PIR" id="A96781">
    <property type="entry name" value="A96781"/>
</dbReference>
<dbReference type="RefSeq" id="NP_565101.1">
    <property type="nucleotide sequence ID" value="NM_106166.4"/>
</dbReference>
<dbReference type="PDB" id="3AG7">
    <property type="method" value="X-ray"/>
    <property type="resolution" value="1.80 A"/>
    <property type="chains" value="A=551-651"/>
</dbReference>
<dbReference type="PDBsum" id="3AG7"/>
<dbReference type="SMR" id="Q9C9Q4"/>
<dbReference type="BioGRID" id="29066">
    <property type="interactions" value="4"/>
</dbReference>
<dbReference type="FunCoup" id="Q9C9Q4">
    <property type="interactions" value="528"/>
</dbReference>
<dbReference type="IntAct" id="Q9C9Q4">
    <property type="interactions" value="2"/>
</dbReference>
<dbReference type="STRING" id="3702.Q9C9Q4"/>
<dbReference type="iPTMnet" id="Q9C9Q4"/>
<dbReference type="PaxDb" id="3702-AT1G75100.1"/>
<dbReference type="ProteomicsDB" id="238968"/>
<dbReference type="EnsemblPlants" id="AT1G75100.1">
    <property type="protein sequence ID" value="AT1G75100.1"/>
    <property type="gene ID" value="AT1G75100"/>
</dbReference>
<dbReference type="GeneID" id="843847"/>
<dbReference type="Gramene" id="AT1G75100.1">
    <property type="protein sequence ID" value="AT1G75100.1"/>
    <property type="gene ID" value="AT1G75100"/>
</dbReference>
<dbReference type="KEGG" id="ath:AT1G75100"/>
<dbReference type="Araport" id="AT1G75100"/>
<dbReference type="TAIR" id="AT1G75100">
    <property type="gene designation" value="JAC1"/>
</dbReference>
<dbReference type="eggNOG" id="KOG0431">
    <property type="taxonomic scope" value="Eukaryota"/>
</dbReference>
<dbReference type="HOGENOM" id="CLU_026675_0_0_1"/>
<dbReference type="InParanoid" id="Q9C9Q4"/>
<dbReference type="OMA" id="WNGFNEK"/>
<dbReference type="OrthoDB" id="1717591at2759"/>
<dbReference type="PhylomeDB" id="Q9C9Q4"/>
<dbReference type="EvolutionaryTrace" id="Q9C9Q4"/>
<dbReference type="PRO" id="PR:Q9C9Q4"/>
<dbReference type="Proteomes" id="UP000006548">
    <property type="component" value="Chromosome 1"/>
</dbReference>
<dbReference type="ExpressionAtlas" id="Q9C9Q4">
    <property type="expression patterns" value="baseline and differential"/>
</dbReference>
<dbReference type="GO" id="GO:0005737">
    <property type="term" value="C:cytoplasm"/>
    <property type="evidence" value="ECO:0000314"/>
    <property type="project" value="TAIR"/>
</dbReference>
<dbReference type="GO" id="GO:0005739">
    <property type="term" value="C:mitochondrion"/>
    <property type="evidence" value="ECO:0007005"/>
    <property type="project" value="TAIR"/>
</dbReference>
<dbReference type="GO" id="GO:0007015">
    <property type="term" value="P:actin filament organization"/>
    <property type="evidence" value="ECO:0000315"/>
    <property type="project" value="UniProtKB"/>
</dbReference>
<dbReference type="GO" id="GO:0071483">
    <property type="term" value="P:cellular response to blue light"/>
    <property type="evidence" value="ECO:0000315"/>
    <property type="project" value="UniProtKB"/>
</dbReference>
<dbReference type="GO" id="GO:0009904">
    <property type="term" value="P:chloroplast accumulation movement"/>
    <property type="evidence" value="ECO:0000315"/>
    <property type="project" value="TAIR"/>
</dbReference>
<dbReference type="GO" id="GO:0009903">
    <property type="term" value="P:chloroplast avoidance movement"/>
    <property type="evidence" value="ECO:0000315"/>
    <property type="project" value="UniProtKB"/>
</dbReference>
<dbReference type="GO" id="GO:0080183">
    <property type="term" value="P:response to photooxidative stress"/>
    <property type="evidence" value="ECO:0000270"/>
    <property type="project" value="TAIR"/>
</dbReference>
<dbReference type="CDD" id="cd06257">
    <property type="entry name" value="DnaJ"/>
    <property type="match status" value="1"/>
</dbReference>
<dbReference type="FunFam" id="1.10.287.110:FF:000043">
    <property type="entry name" value="J-domain protein required for chloroplast accumulation response 1"/>
    <property type="match status" value="1"/>
</dbReference>
<dbReference type="Gene3D" id="1.10.287.110">
    <property type="entry name" value="DnaJ domain"/>
    <property type="match status" value="1"/>
</dbReference>
<dbReference type="InterPro" id="IPR001623">
    <property type="entry name" value="DnaJ_domain"/>
</dbReference>
<dbReference type="InterPro" id="IPR036869">
    <property type="entry name" value="J_dom_sf"/>
</dbReference>
<dbReference type="PANTHER" id="PTHR23172">
    <property type="entry name" value="AUXILIN/CYCLIN G-ASSOCIATED KINASE-RELATED"/>
    <property type="match status" value="1"/>
</dbReference>
<dbReference type="PANTHER" id="PTHR23172:SF64">
    <property type="entry name" value="J DOMAIN-CONTAINING PROTEIN REQUIRED FOR CHLOROPLAST ACCUMULATION RESPONSE 1"/>
    <property type="match status" value="1"/>
</dbReference>
<dbReference type="SUPFAM" id="SSF46565">
    <property type="entry name" value="Chaperone J-domain"/>
    <property type="match status" value="1"/>
</dbReference>
<organism>
    <name type="scientific">Arabidopsis thaliana</name>
    <name type="common">Mouse-ear cress</name>
    <dbReference type="NCBI Taxonomy" id="3702"/>
    <lineage>
        <taxon>Eukaryota</taxon>
        <taxon>Viridiplantae</taxon>
        <taxon>Streptophyta</taxon>
        <taxon>Embryophyta</taxon>
        <taxon>Tracheophyta</taxon>
        <taxon>Spermatophyta</taxon>
        <taxon>Magnoliopsida</taxon>
        <taxon>eudicotyledons</taxon>
        <taxon>Gunneridae</taxon>
        <taxon>Pentapetalae</taxon>
        <taxon>rosids</taxon>
        <taxon>malvids</taxon>
        <taxon>Brassicales</taxon>
        <taxon>Brassicaceae</taxon>
        <taxon>Camelineae</taxon>
        <taxon>Arabidopsis</taxon>
    </lineage>
</organism>
<proteinExistence type="evidence at protein level"/>